<keyword id="KW-0927">Auxin signaling pathway</keyword>
<keyword id="KW-0217">Developmental protein</keyword>
<keyword id="KW-0472">Membrane</keyword>
<keyword id="KW-0479">Metal-binding</keyword>
<keyword id="KW-1185">Reference proteome</keyword>
<keyword id="KW-0812">Transmembrane</keyword>
<keyword id="KW-1133">Transmembrane helix</keyword>
<keyword id="KW-0862">Zinc</keyword>
<keyword id="KW-0863">Zinc-finger</keyword>
<sequence length="4965" mass="552028">MSIMSSINECLATCKVLISPSMLPLHVLLSVEQVESTVVEIVERSLEFCLLYLEKSSYACEDYGLLNEVAYFMECVLLRGTPSKVYSLEPSVVNDVIEQWSSVQVDSERISPQEKYFCYLKGFNCSNSGDDLQRFRLTLSPECLQQDYVIAENTESSHTASPNGMVSIAQHFAVVHLHCIPVLLTLVQKLCQSPALDVIEDTNFNMRLSFGQRILKLVHGLAMEFPCDASDAMMLCSVARCTDSLPVLFKLKFKFANHDRVFSGDGVGTVLLQILDEFLQLIHIIFCNSDICCTVQVCILASLLEIFSPEKWKYDRSAACLMPPLVYSPHIVQYVLKLLNDTKRWTSRVDRDRPGKDVLGYSCNSETDGLSCHARSKKVPLLKKYTSEEYLQLIFPSEEQWLDDLVHLIFFLHEEGVKSMPLLEKPQMSCTKQVTLSELESVASHEEEALFGNLFAEARSTGVADSVEQPISLGSGPSSSQHGPIQLAADLICFMKMSIFSPEWCTAIYVDACRKFHSNHLEQFLSILQCPAFCSDESIATTSLSEVNSLHINTACFELLQMFLISHECPASLREDLVDKVFNAENGMYTYNNYTLALVARAIISGASSIYNLGRKVFVQENETASTWSKCIWTHKMGFTPVKTPACLAAYVVVSGNTSVMVAYEVKIQNEGDILLKEGQSRSMNDYLPSFTAEVVEGIFADTVKEYASTSSLFPQLIDVTPAHAEIYFDKSALEALGLNFANLGSNISEILGVWKGRKAEVAEDLIAERYLFLICWSTLSGIGYSGGYEGLLNPDFADVNFFISFALSVSDDASSLLDANLPSVIFGFLKLLQSEILCGPSVLESWDFLRKGAWLSLILSLINTGFWGHQTSGKPDVDLQGKQVVQDAEIFGKSLLTFISENSGHCLHVLSSLLETYLHAFKEAFISFVVEKGRVCEDHCYPSWLLKHSAFDKSKHPLLFEKVGSNIGMLEPICDLSSRIDRVATKLGDGRKEYFLLKCLLHGFPVNSASNNSAILSCVLVINEIIYMLNGCIKIMQPNDRDLVDVGVISKLLSMIMTIKSDGMFTSIHKLCDSIFMSLIDQKDDLAGYSDLFVLKQLEGYLADINSKEIMDNEVKEIIVFTIVDLVEDLRSKTNVFKFFLGEAEGAPERANSLFALEQADMSVFIDVLDKCQSEQVNLKILNLFTDILGDGLCPDLKQKLQHKFIGMDVSCFSSWLEFRTLGHSMKIESTNSTTSGPTALRELTMDFLMRLTCPSSETLAKELQHHLFDSMLLLLDKAFMSCDLQIVKAHFHFIAQLSTDESHFKELFEKTLKLMENMVGNEGLLHTLKFLFTCVESVFGDAGSNRSALKRLSSKSSGNSFGSGSLIPKQLKNSDSLVLRTNQESNSTVDCDASSGEEDEDDGTSDGELVSIDRDEEEDGNSERALATKVCTFTSSGSNFMEQHWYFCYTCDLTVSKGCCSVCAKVCHQGHRVVYSRSSRFFCDCGAGGVRGSSCQCLKPRKFTGTSSVSPPVTSSFQPILPYHEDVEPVADSGSDFEDDISTEAENCIKLSVPKGFSDELPVFLKNLDVEVRMLELCKKLLPMILSQRELNLLKDRKVFLGGEMPMSQASDIFQLKKAFKSGSLDLKIKADYPNSRELKSHLANGSLTKSLLSISIRGKLAVGEGDKVAIFDVGQIIGQPTAAPITADKTNVKPLSRNIVRFEIVHLIFNPLVEHYLSVAGYEDCQVLTLNSRGEVTDRLAIELALQGAYIRCVEWVPGSQVQLMVVTNKFVKIYDLSQDNISPLHYFTVADDIIVDATLVPSSMGKLVLLVLSEGGLLYRLNVALAGDVGAKTLTDTVLVKDAVSMHKGLSLYFSSTYRLLFVSHQDGTTYMGRLDGDSSSITELSYICENDQDGKSKPAGLYRWRELIAGSGALACLSKFKSNSPLAVSLGPHELFAHNMRHASGSNAPVVGIAAYKPLSKDKAHCLLLYDDGSLNIYSHTPNGSDSSTTLTAEQTKKLGSSILSSRAYAGTKPEFPLDFFEKTTCITCDVKFNSDTTKSSDSESIKQRLSSDDGYLESLTSAGFKVTISNPNPDIVMVGCRIHVGNTSASNIPSEITIFHRVIKLDEGMRSWYDIPFTTAESLLADEEFTIVVGRTFDGSSIPRIDSIEVYGRAKDEFGWKEKMDAALDMEAHVLGGSSASGKSGKKAQTMQAAPIQEQVLADALRILSRIYLLCQPGFCTDTIDADMELNNLKCRSLLETIFQSDREPLLHSAACRVLQAVFPKKEIYYHVKDTMRLLGVIKSLPSITSRIGVGGAASSWVTKEFIAQIHTVSKVAVHRKSNLASFLETHGTELVDGLMQVFWGILDLDRPDTQRINSLVVPCVEFIYSYAECLALHSNEKSGVSVAPAVALLKKLLFAPYEAVQTSSSLAISSRFLQVPFPKQTMIANDDAPDNHAKASAASNSTTGNAQVMIEEDPATSSVQYCCDGCSTVPILRRRWHCNICPDFDLCETCYEILDADRLPAPHSRDHPMSAIPIELDTFGGEGNEIHFSVDELTDSSVLQAPADRTIQTSPSSIHVLDASESVDFHGSMTEQRTVSISASKRAINSLLLSRLIEELSGWMETTAGTRAIPIMQLFYRLSSAVGGPFMDSTKPENLDLEKFVKWLIDEINISKPFPAKTRCSFGEVSILVFMFFTLMFRNWHQPGTDGSHSKSGGSSDLTEKGPVHVQVSTTTLQSSNDDHDKNEFASQLIRACSALRQQSFLNYLMDILQQLVHVFKSSSINGEGGSSSSGCGSLLTVRRELPAGNFSPFFSDSYAKSHPTDLFMDYYKLLLENTFRLVYSMVRPEKEKSADKDKSCKVPNTKDLKLDGYQDVLCSYISNAHTTFVRRYARRLFLHLCGSKTHYYSVRDSWQYSHEVKKLHKIINKSGGFRNPVPYERSVKLIKCLSTLCDVAASRPRNWQKFCLKHTDLLPFLMDNFYYFSEECIVQTLKLLNLAFYSGKDANHNAQKTESGDIGSSTRTGSQSSDSKKKRKGDDSSEGSSEKSCMDMEQAVVVFTGKDGDVLKRFVDTFLLEWNSTSVRHEAKSVLFGLWYHAKSSFKENMLTTLLQKVKYLPMYGQNIIEYTDLMTCLLGKANDSTAKQSDTELLNKCLTSDVVSCIFDTLHSQNELLANHPNSRIYNTLSCLVEFDGYYLESEPCVTCSCPDVPYSRMKLESLKSETKFTDNRIIVKCTGSFTIQSVTMNVYDARKSKSVKVLNLYYNNRPVTDLSELKNNWSLWKRAKSCHLTFNQTELKVEFPIPITACNFMIELDSFYENLQASSLESLQCPRCSRSVTDKHGICSNCHENAYQCRQCRNINYENLDSFLCNECGYSKYGRFEFHFMAKPSFSFDNMENDDDMRKGLTAIESESENAHRRYQQLMGFKKPLIKLVSSIGEQEIDSQQKDAVQQMMVSLPGPTGKVNRKIALLGVLYGEKCKAAFDSVSKSVQTLQGLRRVLMTYLHQKNSNDTDALPACSIPRSPSSCYGCSTTFVTQCLELLQVLSKHATSRKQLVSAGILSELFENNIHQGPRTARTLARAVLSSFSEGDADAVQELNNLIQKKVMYCLEHHRSMDISQSTREELLLLSETCALVDEFWEARLRVAFQLLFSSIKVGAKHPAISEHIILPCLRIISQACTPPKSDSGEKEPGMGKSSLMQAKNDDTVGHSVTNLSTSKTQSELSGKIPDGSRRRQDISLLSYSEWESGASYLDFVRRQYKVSQAVKGLQKTRHDSQKSDYLVLKYGLRWKRRACRKSSKGDFSKFALGSWVSDLILSSCSQSIRSEICTLISLLCPSNSSRQFQLLNLLMSLLPRTLSAGESAAEYFELLGTMIDTEASRLFLTVRGCLTTLCSLITKEVSNVESQERSLSIDISQGFILHKLVELLNKFLEIPNIRARFMSDNLLSDVLEAFLVIRGLVVQKTKLINDCNRLLKDLLDSLLVESTANKRQFIRACISGLQKHVKEKKRRTSLFILEQLCNLICPVKPEPVYLLILNKAHTQEEFIRGSMTRNPYSSAEIGPLMRDVKNKICHQLDLIGLLEDDYGMELLVAGNIISLDLSISQVYEQVWRKHHGQTQHSLSNASQLSAAASSVRDCPPMTVTYRLQGLDGEATEPMIKELEDEREESQDPEVEFAIAGAVRECGGLEIILSMIQSLREDELRSNQEELGSVLNLLKYCCKIRENRCALLRLGALGLLLETARRAFSVDAMEPAEGILLIVESLTMEANESDISIAQSVFTTTTEETGAGEEAKKIVLMFLERLCPPDGAKKSNKQQRNEEMVARILPNLTYGEPAAMEALVLHFEPYLMNWSEFDQLQKQHEENPKDETLSKNASMQRSAVENFVRVSESLKTSSCGERLKEIILEKGITKAAVGHLRESFASAGQASFRTSAEWTVGLKLPSIPLILSMLKGLAKGDLPTQKCVDEEDILPLLHALEGVPGENEIGARAENLLDTLANKENNGDGFLAEKIQELRHATRDEMRRRALKKREMLLQGLGMRQEFASDGGRRIVVSQPIIEGLDDVEEEEDGLACMVCREGYTLRPTDMLGVYAFSKRVNLGATSSGSGRGDCVYTTVSHFNIIHYQCHQEAKRADAALKNPKKEWDGATLRNNETLCNCIFPLRGPSVPPGQYTRCLDQYWDQLNSLGRADGSRLRLLTYDIVLMLARFATGASFSTDCKGGGRESNSRFLPFMIQMASHLVDGSANQQRHVMAKAVTSYLSSSPSTPESPVRLSALSGARGGSGSSEETVQFMMVNSLLSESYESWLQHRPAFLQRGIYHAYMQHKHGRSTLKLSADTSSSAVRSDEGSSADSNDSKRLFAIVQPMLVYTGLIEQLQQFFKKGKSSGTQKVGEKDGSSGGNLEAWEIMMKEKLGNMKEMLGFSKDVLSWLEDMTSSEDLQEAFDVMGALPDVFSGGHTTCEDFVRAIIHGAKS</sequence>
<reference key="1">
    <citation type="journal article" date="2005" name="Nature">
        <title>The map-based sequence of the rice genome.</title>
        <authorList>
            <consortium name="International rice genome sequencing project (IRGSP)"/>
        </authorList>
    </citation>
    <scope>NUCLEOTIDE SEQUENCE [LARGE SCALE GENOMIC DNA]</scope>
    <source>
        <strain>cv. Nipponbare</strain>
    </source>
</reference>
<reference key="2">
    <citation type="journal article" date="2008" name="Nucleic Acids Res.">
        <title>The rice annotation project database (RAP-DB): 2008 update.</title>
        <authorList>
            <consortium name="The rice annotation project (RAP)"/>
        </authorList>
    </citation>
    <scope>GENOME REANNOTATION</scope>
    <source>
        <strain>cv. Nipponbare</strain>
    </source>
</reference>
<reference key="3">
    <citation type="journal article" date="2013" name="Rice">
        <title>Improvement of the Oryza sativa Nipponbare reference genome using next generation sequence and optical map data.</title>
        <authorList>
            <person name="Kawahara Y."/>
            <person name="de la Bastide M."/>
            <person name="Hamilton J.P."/>
            <person name="Kanamori H."/>
            <person name="McCombie W.R."/>
            <person name="Ouyang S."/>
            <person name="Schwartz D.C."/>
            <person name="Tanaka T."/>
            <person name="Wu J."/>
            <person name="Zhou S."/>
            <person name="Childs K.L."/>
            <person name="Davidson R.M."/>
            <person name="Lin H."/>
            <person name="Quesada-Ocampo L."/>
            <person name="Vaillancourt B."/>
            <person name="Sakai H."/>
            <person name="Lee S.S."/>
            <person name="Kim J."/>
            <person name="Numa H."/>
            <person name="Itoh T."/>
            <person name="Buell C.R."/>
            <person name="Matsumoto T."/>
        </authorList>
    </citation>
    <scope>GENOME REANNOTATION</scope>
    <source>
        <strain>cv. Nipponbare</strain>
    </source>
</reference>
<reference key="4">
    <citation type="journal article" date="2005" name="PLoS Biol.">
        <title>The genomes of Oryza sativa: a history of duplications.</title>
        <authorList>
            <person name="Yu J."/>
            <person name="Wang J."/>
            <person name="Lin W."/>
            <person name="Li S."/>
            <person name="Li H."/>
            <person name="Zhou J."/>
            <person name="Ni P."/>
            <person name="Dong W."/>
            <person name="Hu S."/>
            <person name="Zeng C."/>
            <person name="Zhang J."/>
            <person name="Zhang Y."/>
            <person name="Li R."/>
            <person name="Xu Z."/>
            <person name="Li S."/>
            <person name="Li X."/>
            <person name="Zheng H."/>
            <person name="Cong L."/>
            <person name="Lin L."/>
            <person name="Yin J."/>
            <person name="Geng J."/>
            <person name="Li G."/>
            <person name="Shi J."/>
            <person name="Liu J."/>
            <person name="Lv H."/>
            <person name="Li J."/>
            <person name="Wang J."/>
            <person name="Deng Y."/>
            <person name="Ran L."/>
            <person name="Shi X."/>
            <person name="Wang X."/>
            <person name="Wu Q."/>
            <person name="Li C."/>
            <person name="Ren X."/>
            <person name="Wang J."/>
            <person name="Wang X."/>
            <person name="Li D."/>
            <person name="Liu D."/>
            <person name="Zhang X."/>
            <person name="Ji Z."/>
            <person name="Zhao W."/>
            <person name="Sun Y."/>
            <person name="Zhang Z."/>
            <person name="Bao J."/>
            <person name="Han Y."/>
            <person name="Dong L."/>
            <person name="Ji J."/>
            <person name="Chen P."/>
            <person name="Wu S."/>
            <person name="Liu J."/>
            <person name="Xiao Y."/>
            <person name="Bu D."/>
            <person name="Tan J."/>
            <person name="Yang L."/>
            <person name="Ye C."/>
            <person name="Zhang J."/>
            <person name="Xu J."/>
            <person name="Zhou Y."/>
            <person name="Yu Y."/>
            <person name="Zhang B."/>
            <person name="Zhuang S."/>
            <person name="Wei H."/>
            <person name="Liu B."/>
            <person name="Lei M."/>
            <person name="Yu H."/>
            <person name="Li Y."/>
            <person name="Xu H."/>
            <person name="Wei S."/>
            <person name="He X."/>
            <person name="Fang L."/>
            <person name="Zhang Z."/>
            <person name="Zhang Y."/>
            <person name="Huang X."/>
            <person name="Su Z."/>
            <person name="Tong W."/>
            <person name="Li J."/>
            <person name="Tong Z."/>
            <person name="Li S."/>
            <person name="Ye J."/>
            <person name="Wang L."/>
            <person name="Fang L."/>
            <person name="Lei T."/>
            <person name="Chen C.-S."/>
            <person name="Chen H.-C."/>
            <person name="Xu Z."/>
            <person name="Li H."/>
            <person name="Huang H."/>
            <person name="Zhang F."/>
            <person name="Xu H."/>
            <person name="Li N."/>
            <person name="Zhao C."/>
            <person name="Li S."/>
            <person name="Dong L."/>
            <person name="Huang Y."/>
            <person name="Li L."/>
            <person name="Xi Y."/>
            <person name="Qi Q."/>
            <person name="Li W."/>
            <person name="Zhang B."/>
            <person name="Hu W."/>
            <person name="Zhang Y."/>
            <person name="Tian X."/>
            <person name="Jiao Y."/>
            <person name="Liang X."/>
            <person name="Jin J."/>
            <person name="Gao L."/>
            <person name="Zheng W."/>
            <person name="Hao B."/>
            <person name="Liu S.-M."/>
            <person name="Wang W."/>
            <person name="Yuan L."/>
            <person name="Cao M."/>
            <person name="McDermott J."/>
            <person name="Samudrala R."/>
            <person name="Wang J."/>
            <person name="Wong G.K.-S."/>
            <person name="Yang H."/>
        </authorList>
    </citation>
    <scope>NUCLEOTIDE SEQUENCE [LARGE SCALE GENOMIC DNA]</scope>
    <source>
        <strain>cv. Nipponbare</strain>
    </source>
</reference>
<accession>B9G2A8</accession>
<accession>Q6K4G1</accession>
<gene>
    <name type="ordered locus">Os09g0247700</name>
    <name type="ordered locus">LOC_Os09g07294</name>
    <name type="ORF">OJ1451_A02.25</name>
    <name type="ORF">OsJ_28507</name>
    <name type="ORF">P0499G10.6</name>
</gene>
<name>BIG_ORYSJ</name>
<protein>
    <recommendedName>
        <fullName>Auxin transport protein BIG</fullName>
    </recommendedName>
</protein>
<comment type="function">
    <text evidence="1">Required for auxin efflux and polar auxin transport (PAT) influencing auxin-mediated developmental responses (e.g. cell elongation, apical dominance, lateral root production, inflorescence architecture, general growth and development) (By similarity).</text>
</comment>
<comment type="subcellular location">
    <subcellularLocation>
        <location evidence="7">Membrane</location>
        <topology evidence="7">Multi-pass membrane protein</topology>
    </subcellularLocation>
</comment>
<comment type="similarity">
    <text evidence="7">Belongs to the UBR4 family.</text>
</comment>
<comment type="sequence caution" evidence="7">
    <conflict type="erroneous gene model prediction">
        <sequence resource="EMBL-CDS" id="BAD23392"/>
    </conflict>
</comment>
<comment type="sequence caution" evidence="7">
    <conflict type="erroneous gene model prediction">
        <sequence resource="EMBL-CDS" id="BAD25995"/>
    </conflict>
</comment>
<comment type="sequence caution" evidence="7">
    <conflict type="erroneous gene model prediction">
        <sequence resource="EMBL-CDS" id="BAF24578"/>
    </conflict>
</comment>
<evidence type="ECO:0000250" key="1"/>
<evidence type="ECO:0000255" key="2"/>
<evidence type="ECO:0000255" key="3">
    <source>
        <dbReference type="PROSITE-ProRule" id="PRU00228"/>
    </source>
</evidence>
<evidence type="ECO:0000255" key="4">
    <source>
        <dbReference type="PROSITE-ProRule" id="PRU00508"/>
    </source>
</evidence>
<evidence type="ECO:0000255" key="5">
    <source>
        <dbReference type="PROSITE-ProRule" id="PRU01388"/>
    </source>
</evidence>
<evidence type="ECO:0000256" key="6">
    <source>
        <dbReference type="SAM" id="MobiDB-lite"/>
    </source>
</evidence>
<evidence type="ECO:0000305" key="7"/>
<proteinExistence type="evidence at transcript level"/>
<dbReference type="EMBL" id="AP005571">
    <property type="protein sequence ID" value="BAD23392.1"/>
    <property type="status" value="ALT_SEQ"/>
    <property type="molecule type" value="Genomic_DNA"/>
</dbReference>
<dbReference type="EMBL" id="AP005587">
    <property type="protein sequence ID" value="BAD25995.1"/>
    <property type="status" value="ALT_SEQ"/>
    <property type="molecule type" value="Genomic_DNA"/>
</dbReference>
<dbReference type="EMBL" id="AP008215">
    <property type="protein sequence ID" value="BAF24578.1"/>
    <property type="status" value="ALT_SEQ"/>
    <property type="molecule type" value="Genomic_DNA"/>
</dbReference>
<dbReference type="EMBL" id="AP014965">
    <property type="status" value="NOT_ANNOTATED_CDS"/>
    <property type="molecule type" value="Genomic_DNA"/>
</dbReference>
<dbReference type="EMBL" id="CM000146">
    <property type="protein sequence ID" value="EEE69254.1"/>
    <property type="molecule type" value="Genomic_DNA"/>
</dbReference>
<dbReference type="SMR" id="B9G2A8"/>
<dbReference type="FunCoup" id="B9G2A8">
    <property type="interactions" value="2056"/>
</dbReference>
<dbReference type="STRING" id="39947.B9G2A8"/>
<dbReference type="PaxDb" id="39947-B9G2A8"/>
<dbReference type="KEGG" id="dosa:Os09g0247700"/>
<dbReference type="eggNOG" id="KOG1776">
    <property type="taxonomic scope" value="Eukaryota"/>
</dbReference>
<dbReference type="HOGENOM" id="CLU_2874586_0_0_1"/>
<dbReference type="InParanoid" id="B9G2A8"/>
<dbReference type="Proteomes" id="UP000000763">
    <property type="component" value="Chromosome 9"/>
</dbReference>
<dbReference type="Proteomes" id="UP000007752">
    <property type="component" value="Chromosome 9"/>
</dbReference>
<dbReference type="Proteomes" id="UP000059680">
    <property type="component" value="Chromosome 9"/>
</dbReference>
<dbReference type="GO" id="GO:0016020">
    <property type="term" value="C:membrane"/>
    <property type="evidence" value="ECO:0007669"/>
    <property type="project" value="UniProtKB-SubCell"/>
</dbReference>
<dbReference type="GO" id="GO:0008270">
    <property type="term" value="F:zinc ion binding"/>
    <property type="evidence" value="ECO:0007669"/>
    <property type="project" value="UniProtKB-KW"/>
</dbReference>
<dbReference type="GO" id="GO:0009926">
    <property type="term" value="P:auxin polar transport"/>
    <property type="evidence" value="ECO:0000250"/>
    <property type="project" value="UniProtKB"/>
</dbReference>
<dbReference type="GO" id="GO:0009734">
    <property type="term" value="P:auxin-activated signaling pathway"/>
    <property type="evidence" value="ECO:0007669"/>
    <property type="project" value="UniProtKB-KW"/>
</dbReference>
<dbReference type="GO" id="GO:0009826">
    <property type="term" value="P:unidimensional cell growth"/>
    <property type="evidence" value="ECO:0000250"/>
    <property type="project" value="UniProtKB"/>
</dbReference>
<dbReference type="CDD" id="cd19681">
    <property type="entry name" value="UBR-box_BIG_like"/>
    <property type="match status" value="1"/>
</dbReference>
<dbReference type="CDD" id="cd02249">
    <property type="entry name" value="ZZ"/>
    <property type="match status" value="1"/>
</dbReference>
<dbReference type="FunFam" id="3.30.60.90:FF:000010">
    <property type="entry name" value="auxin transport protein BIG"/>
    <property type="match status" value="1"/>
</dbReference>
<dbReference type="Gene3D" id="3.30.60.90">
    <property type="match status" value="1"/>
</dbReference>
<dbReference type="InterPro" id="IPR016024">
    <property type="entry name" value="ARM-type_fold"/>
</dbReference>
<dbReference type="InterPro" id="IPR025704">
    <property type="entry name" value="E3_Ub_ligase_UBR4_C"/>
</dbReference>
<dbReference type="InterPro" id="IPR045189">
    <property type="entry name" value="UBR4-like"/>
</dbReference>
<dbReference type="InterPro" id="IPR056530">
    <property type="entry name" value="UBR4-like_dom"/>
</dbReference>
<dbReference type="InterPro" id="IPR003126">
    <property type="entry name" value="Znf_UBR"/>
</dbReference>
<dbReference type="InterPro" id="IPR000433">
    <property type="entry name" value="Znf_ZZ"/>
</dbReference>
<dbReference type="InterPro" id="IPR043145">
    <property type="entry name" value="Znf_ZZ_sf"/>
</dbReference>
<dbReference type="PANTHER" id="PTHR21725">
    <property type="entry name" value="E3 UBIQUITIN-PROTEIN LIGASE UBR4"/>
    <property type="match status" value="1"/>
</dbReference>
<dbReference type="PANTHER" id="PTHR21725:SF1">
    <property type="entry name" value="E3 UBIQUITIN-PROTEIN LIGASE UBR4"/>
    <property type="match status" value="1"/>
</dbReference>
<dbReference type="Pfam" id="PF13764">
    <property type="entry name" value="E3_UbLigase_R4"/>
    <property type="match status" value="1"/>
</dbReference>
<dbReference type="Pfam" id="PF24079">
    <property type="entry name" value="UBR4"/>
    <property type="match status" value="1"/>
</dbReference>
<dbReference type="Pfam" id="PF00569">
    <property type="entry name" value="ZZ"/>
    <property type="match status" value="1"/>
</dbReference>
<dbReference type="SMART" id="SM00396">
    <property type="entry name" value="ZnF_UBR1"/>
    <property type="match status" value="1"/>
</dbReference>
<dbReference type="SMART" id="SM00291">
    <property type="entry name" value="ZnF_ZZ"/>
    <property type="match status" value="1"/>
</dbReference>
<dbReference type="SUPFAM" id="SSF48371">
    <property type="entry name" value="ARM repeat"/>
    <property type="match status" value="1"/>
</dbReference>
<dbReference type="SUPFAM" id="SSF101908">
    <property type="entry name" value="Putative isomerase YbhE"/>
    <property type="match status" value="1"/>
</dbReference>
<dbReference type="SUPFAM" id="SSF57850">
    <property type="entry name" value="RING/U-box"/>
    <property type="match status" value="1"/>
</dbReference>
<dbReference type="PROSITE" id="PS52043">
    <property type="entry name" value="UBR4_E3"/>
    <property type="match status" value="1"/>
</dbReference>
<dbReference type="PROSITE" id="PS51157">
    <property type="entry name" value="ZF_UBR"/>
    <property type="match status" value="1"/>
</dbReference>
<dbReference type="PROSITE" id="PS01357">
    <property type="entry name" value="ZF_ZZ_1"/>
    <property type="match status" value="1"/>
</dbReference>
<dbReference type="PROSITE" id="PS50135">
    <property type="entry name" value="ZF_ZZ_2"/>
    <property type="match status" value="1"/>
</dbReference>
<feature type="chain" id="PRO_0000410728" description="Auxin transport protein BIG">
    <location>
        <begin position="1"/>
        <end position="4965"/>
    </location>
</feature>
<feature type="transmembrane region" description="Helical" evidence="2">
    <location>
        <begin position="289"/>
        <end position="309"/>
    </location>
</feature>
<feature type="transmembrane region" description="Helical" evidence="2">
    <location>
        <begin position="646"/>
        <end position="666"/>
    </location>
</feature>
<feature type="transmembrane region" description="Helical" evidence="2">
    <location>
        <begin position="772"/>
        <end position="792"/>
    </location>
</feature>
<feature type="domain" description="UZI" evidence="5">
    <location>
        <begin position="4684"/>
        <end position="4963"/>
    </location>
</feature>
<feature type="zinc finger region" description="UBR-type" evidence="4">
    <location>
        <begin position="1431"/>
        <end position="1502"/>
    </location>
</feature>
<feature type="zinc finger region" description="ZZ-type" evidence="3">
    <location>
        <begin position="2469"/>
        <end position="2528"/>
    </location>
</feature>
<feature type="zinc finger region" description="MYND-type; degenerate">
    <location>
        <begin position="3319"/>
        <end position="3359"/>
    </location>
</feature>
<feature type="zinc finger region" description="HemiRING-type" evidence="5">
    <location>
        <begin position="4562"/>
        <end position="4681"/>
    </location>
</feature>
<feature type="region of interest" description="Disordered" evidence="6">
    <location>
        <begin position="1383"/>
        <end position="1425"/>
    </location>
</feature>
<feature type="region of interest" description="Disordered" evidence="6">
    <location>
        <begin position="2437"/>
        <end position="2456"/>
    </location>
</feature>
<feature type="region of interest" description="Disordered" evidence="6">
    <location>
        <begin position="2997"/>
        <end position="3037"/>
    </location>
</feature>
<feature type="region of interest" description="Disordered" evidence="6">
    <location>
        <begin position="3672"/>
        <end position="3721"/>
    </location>
</feature>
<feature type="region of interest" description="UBR4 E3 catalytic module" evidence="5">
    <location>
        <begin position="4433"/>
        <end position="4963"/>
    </location>
</feature>
<feature type="region of interest" description="Disordered" evidence="6">
    <location>
        <begin position="4753"/>
        <end position="4778"/>
    </location>
</feature>
<feature type="region of interest" description="Disordered" evidence="6">
    <location>
        <begin position="4822"/>
        <end position="4846"/>
    </location>
</feature>
<feature type="compositionally biased region" description="Acidic residues" evidence="6">
    <location>
        <begin position="1397"/>
        <end position="1407"/>
    </location>
</feature>
<feature type="compositionally biased region" description="Low complexity" evidence="6">
    <location>
        <begin position="2445"/>
        <end position="2456"/>
    </location>
</feature>
<feature type="compositionally biased region" description="Low complexity" evidence="6">
    <location>
        <begin position="3007"/>
        <end position="3017"/>
    </location>
</feature>
<feature type="compositionally biased region" description="Basic and acidic residues" evidence="6">
    <location>
        <begin position="3024"/>
        <end position="3037"/>
    </location>
</feature>
<feature type="compositionally biased region" description="Polar residues" evidence="6">
    <location>
        <begin position="3699"/>
        <end position="3713"/>
    </location>
</feature>
<feature type="compositionally biased region" description="Low complexity" evidence="6">
    <location>
        <begin position="4753"/>
        <end position="4770"/>
    </location>
</feature>
<feature type="compositionally biased region" description="Polar residues" evidence="6">
    <location>
        <begin position="4824"/>
        <end position="4845"/>
    </location>
</feature>
<feature type="binding site" evidence="3">
    <location>
        <position position="2474"/>
    </location>
    <ligand>
        <name>Zn(2+)</name>
        <dbReference type="ChEBI" id="CHEBI:29105"/>
        <label>1</label>
    </ligand>
</feature>
<feature type="binding site" evidence="3">
    <location>
        <position position="2477"/>
    </location>
    <ligand>
        <name>Zn(2+)</name>
        <dbReference type="ChEBI" id="CHEBI:29105"/>
        <label>1</label>
    </ligand>
</feature>
<feature type="binding site" evidence="3">
    <location>
        <position position="2489"/>
    </location>
    <ligand>
        <name>Zn(2+)</name>
        <dbReference type="ChEBI" id="CHEBI:29105"/>
        <label>2</label>
    </ligand>
</feature>
<feature type="binding site" evidence="3">
    <location>
        <position position="2492"/>
    </location>
    <ligand>
        <name>Zn(2+)</name>
        <dbReference type="ChEBI" id="CHEBI:29105"/>
        <label>2</label>
    </ligand>
</feature>
<feature type="binding site" evidence="3">
    <location>
        <position position="2498"/>
    </location>
    <ligand>
        <name>Zn(2+)</name>
        <dbReference type="ChEBI" id="CHEBI:29105"/>
        <label>1</label>
    </ligand>
</feature>
<feature type="binding site" evidence="3">
    <location>
        <position position="2501"/>
    </location>
    <ligand>
        <name>Zn(2+)</name>
        <dbReference type="ChEBI" id="CHEBI:29105"/>
        <label>1</label>
    </ligand>
</feature>
<feature type="binding site" evidence="3">
    <location>
        <position position="2514"/>
    </location>
    <ligand>
        <name>Zn(2+)</name>
        <dbReference type="ChEBI" id="CHEBI:29105"/>
        <label>2</label>
    </ligand>
</feature>
<feature type="binding site" evidence="3">
    <location>
        <position position="2518"/>
    </location>
    <ligand>
        <name>Zn(2+)</name>
        <dbReference type="ChEBI" id="CHEBI:29105"/>
        <label>2</label>
    </ligand>
</feature>
<feature type="binding site" evidence="5">
    <location>
        <position position="4565"/>
    </location>
    <ligand>
        <name>Zn(2+)</name>
        <dbReference type="ChEBI" id="CHEBI:29105"/>
        <label>3</label>
    </ligand>
</feature>
<feature type="binding site" evidence="5">
    <location>
        <position position="4568"/>
    </location>
    <ligand>
        <name>Zn(2+)</name>
        <dbReference type="ChEBI" id="CHEBI:29105"/>
        <label>3</label>
    </ligand>
</feature>
<feature type="binding site" evidence="5">
    <location>
        <position position="4615"/>
    </location>
    <ligand>
        <name>Zn(2+)</name>
        <dbReference type="ChEBI" id="CHEBI:29105"/>
        <label>3</label>
    </ligand>
</feature>
<feature type="binding site" evidence="5">
    <location>
        <position position="4618"/>
    </location>
    <ligand>
        <name>Zn(2+)</name>
        <dbReference type="ChEBI" id="CHEBI:29105"/>
        <label>3</label>
    </ligand>
</feature>
<organism>
    <name type="scientific">Oryza sativa subsp. japonica</name>
    <name type="common">Rice</name>
    <dbReference type="NCBI Taxonomy" id="39947"/>
    <lineage>
        <taxon>Eukaryota</taxon>
        <taxon>Viridiplantae</taxon>
        <taxon>Streptophyta</taxon>
        <taxon>Embryophyta</taxon>
        <taxon>Tracheophyta</taxon>
        <taxon>Spermatophyta</taxon>
        <taxon>Magnoliopsida</taxon>
        <taxon>Liliopsida</taxon>
        <taxon>Poales</taxon>
        <taxon>Poaceae</taxon>
        <taxon>BOP clade</taxon>
        <taxon>Oryzoideae</taxon>
        <taxon>Oryzeae</taxon>
        <taxon>Oryzinae</taxon>
        <taxon>Oryza</taxon>
        <taxon>Oryza sativa</taxon>
    </lineage>
</organism>